<dbReference type="EMBL" id="L07590">
    <property type="protein sequence ID" value="AAB02613.1"/>
    <property type="molecule type" value="mRNA"/>
</dbReference>
<dbReference type="EMBL" id="L12146">
    <property type="protein sequence ID" value="AAB02614.1"/>
    <property type="molecule type" value="mRNA"/>
</dbReference>
<dbReference type="EMBL" id="AK293012">
    <property type="protein sequence ID" value="BAF85701.1"/>
    <property type="molecule type" value="mRNA"/>
</dbReference>
<dbReference type="EMBL" id="AK298059">
    <property type="protein sequence ID" value="BAG60353.1"/>
    <property type="molecule type" value="mRNA"/>
</dbReference>
<dbReference type="EMBL" id="AK316258">
    <property type="protein sequence ID" value="BAH14629.1"/>
    <property type="molecule type" value="mRNA"/>
</dbReference>
<dbReference type="EMBL" id="AC072039">
    <property type="status" value="NOT_ANNOTATED_CDS"/>
    <property type="molecule type" value="Genomic_DNA"/>
</dbReference>
<dbReference type="EMBL" id="AC092991">
    <property type="status" value="NOT_ANNOTATED_CDS"/>
    <property type="molecule type" value="Genomic_DNA"/>
</dbReference>
<dbReference type="EMBL" id="CH471052">
    <property type="protein sequence ID" value="EAW79122.1"/>
    <property type="molecule type" value="Genomic_DNA"/>
</dbReference>
<dbReference type="EMBL" id="CH471052">
    <property type="protein sequence ID" value="EAW79123.1"/>
    <property type="molecule type" value="Genomic_DNA"/>
</dbReference>
<dbReference type="EMBL" id="AL389975">
    <property type="protein sequence ID" value="CAB97532.1"/>
    <property type="molecule type" value="mRNA"/>
</dbReference>
<dbReference type="CCDS" id="CCDS3087.1">
    <molecule id="Q06190-1"/>
</dbReference>
<dbReference type="CCDS" id="CCDS3088.1">
    <molecule id="Q06190-2"/>
</dbReference>
<dbReference type="CCDS" id="CCDS54642.1">
    <molecule id="Q06190-3"/>
</dbReference>
<dbReference type="PIR" id="A47114">
    <property type="entry name" value="A47114"/>
</dbReference>
<dbReference type="PIR" id="B47114">
    <property type="entry name" value="B47114"/>
</dbReference>
<dbReference type="RefSeq" id="NP_001177376.1">
    <molecule id="Q06190-3"/>
    <property type="nucleotide sequence ID" value="NM_001190447.2"/>
</dbReference>
<dbReference type="RefSeq" id="NP_002709.2">
    <molecule id="Q06190-1"/>
    <property type="nucleotide sequence ID" value="NM_002718.4"/>
</dbReference>
<dbReference type="RefSeq" id="NP_871626.1">
    <molecule id="Q06190-2"/>
    <property type="nucleotide sequence ID" value="NM_181897.3"/>
</dbReference>
<dbReference type="RefSeq" id="XP_006713749.1">
    <molecule id="Q06190-1"/>
    <property type="nucleotide sequence ID" value="XM_006713686.5"/>
</dbReference>
<dbReference type="RefSeq" id="XP_011511258.1">
    <molecule id="Q06190-1"/>
    <property type="nucleotide sequence ID" value="XM_011512956.4"/>
</dbReference>
<dbReference type="PDB" id="4I5J">
    <property type="method" value="X-ray"/>
    <property type="resolution" value="2.09 A"/>
    <property type="chains" value="A=786-1070"/>
</dbReference>
<dbReference type="PDB" id="4I5K">
    <property type="method" value="X-ray"/>
    <property type="resolution" value="2.90 A"/>
    <property type="chains" value="A/B=786-1070"/>
</dbReference>
<dbReference type="PDBsum" id="4I5J"/>
<dbReference type="PDBsum" id="4I5K"/>
<dbReference type="SMR" id="Q06190"/>
<dbReference type="BioGRID" id="111515">
    <property type="interactions" value="52"/>
</dbReference>
<dbReference type="CORUM" id="Q06190"/>
<dbReference type="DIP" id="DIP-29397N"/>
<dbReference type="FunCoup" id="Q06190">
    <property type="interactions" value="1070"/>
</dbReference>
<dbReference type="IntAct" id="Q06190">
    <property type="interactions" value="30"/>
</dbReference>
<dbReference type="MINT" id="Q06190"/>
<dbReference type="STRING" id="9606.ENSP00000264977"/>
<dbReference type="GlyGen" id="Q06190">
    <property type="glycosylation" value="1 site"/>
</dbReference>
<dbReference type="iPTMnet" id="Q06190"/>
<dbReference type="PhosphoSitePlus" id="Q06190"/>
<dbReference type="BioMuta" id="PPP2R3A"/>
<dbReference type="DMDM" id="543720"/>
<dbReference type="jPOST" id="Q06190"/>
<dbReference type="MassIVE" id="Q06190"/>
<dbReference type="PaxDb" id="9606-ENSP00000264977"/>
<dbReference type="PeptideAtlas" id="Q06190"/>
<dbReference type="ProteomicsDB" id="4724"/>
<dbReference type="ProteomicsDB" id="58420">
    <molecule id="Q06190-1"/>
</dbReference>
<dbReference type="ProteomicsDB" id="58421">
    <molecule id="Q06190-2"/>
</dbReference>
<dbReference type="Pumba" id="Q06190"/>
<dbReference type="Antibodypedia" id="33406">
    <property type="antibodies" value="229 antibodies from 30 providers"/>
</dbReference>
<dbReference type="DNASU" id="5523"/>
<dbReference type="Ensembl" id="ENST00000264977.8">
    <molecule id="Q06190-1"/>
    <property type="protein sequence ID" value="ENSP00000264977.3"/>
    <property type="gene ID" value="ENSG00000073711.11"/>
</dbReference>
<dbReference type="Ensembl" id="ENST00000334546.6">
    <molecule id="Q06190-2"/>
    <property type="protein sequence ID" value="ENSP00000334748.2"/>
    <property type="gene ID" value="ENSG00000073711.11"/>
</dbReference>
<dbReference type="Ensembl" id="ENST00000490467.5">
    <molecule id="Q06190-3"/>
    <property type="protein sequence ID" value="ENSP00000419344.1"/>
    <property type="gene ID" value="ENSG00000073711.11"/>
</dbReference>
<dbReference type="GeneID" id="5523"/>
<dbReference type="KEGG" id="hsa:5523"/>
<dbReference type="MANE-Select" id="ENST00000264977.8">
    <property type="protein sequence ID" value="ENSP00000264977.3"/>
    <property type="RefSeq nucleotide sequence ID" value="NM_002718.5"/>
    <property type="RefSeq protein sequence ID" value="NP_002709.2"/>
</dbReference>
<dbReference type="UCSC" id="uc003eqv.3">
    <molecule id="Q06190-1"/>
    <property type="organism name" value="human"/>
</dbReference>
<dbReference type="AGR" id="HGNC:9307"/>
<dbReference type="CTD" id="5523"/>
<dbReference type="DisGeNET" id="5523"/>
<dbReference type="GeneCards" id="PPP2R3A"/>
<dbReference type="HGNC" id="HGNC:9307">
    <property type="gene designation" value="PPP2R3A"/>
</dbReference>
<dbReference type="HPA" id="ENSG00000073711">
    <property type="expression patterns" value="Group enriched (heart muscle, skeletal muscle, tongue)"/>
</dbReference>
<dbReference type="MIM" id="604944">
    <property type="type" value="gene"/>
</dbReference>
<dbReference type="neXtProt" id="NX_Q06190"/>
<dbReference type="OpenTargets" id="ENSG00000073711"/>
<dbReference type="PharmGKB" id="PA35523"/>
<dbReference type="VEuPathDB" id="HostDB:ENSG00000073711"/>
<dbReference type="eggNOG" id="KOG2562">
    <property type="taxonomic scope" value="Eukaryota"/>
</dbReference>
<dbReference type="GeneTree" id="ENSGT00940000154659"/>
<dbReference type="HOGENOM" id="CLU_276803_0_0_1"/>
<dbReference type="InParanoid" id="Q06190"/>
<dbReference type="OMA" id="VQKPASH"/>
<dbReference type="OrthoDB" id="5586at2759"/>
<dbReference type="PAN-GO" id="Q06190">
    <property type="GO annotations" value="3 GO annotations based on evolutionary models"/>
</dbReference>
<dbReference type="PhylomeDB" id="Q06190"/>
<dbReference type="TreeFam" id="TF105554"/>
<dbReference type="PathwayCommons" id="Q06190"/>
<dbReference type="SignaLink" id="Q06190"/>
<dbReference type="BioGRID-ORCS" id="5523">
    <property type="hits" value="11 hits in 1151 CRISPR screens"/>
</dbReference>
<dbReference type="ChiTaRS" id="PPP2R3A">
    <property type="organism name" value="human"/>
</dbReference>
<dbReference type="EvolutionaryTrace" id="Q06190"/>
<dbReference type="GeneWiki" id="PPP2R3A"/>
<dbReference type="GenomeRNAi" id="5523"/>
<dbReference type="Pharos" id="Q06190">
    <property type="development level" value="Tbio"/>
</dbReference>
<dbReference type="PRO" id="PR:Q06190"/>
<dbReference type="Proteomes" id="UP000005640">
    <property type="component" value="Chromosome 3"/>
</dbReference>
<dbReference type="RNAct" id="Q06190">
    <property type="molecule type" value="protein"/>
</dbReference>
<dbReference type="Bgee" id="ENSG00000073711">
    <property type="expression patterns" value="Expressed in biceps brachii and 209 other cell types or tissues"/>
</dbReference>
<dbReference type="ExpressionAtlas" id="Q06190">
    <property type="expression patterns" value="baseline and differential"/>
</dbReference>
<dbReference type="GO" id="GO:0000159">
    <property type="term" value="C:protein phosphatase type 2A complex"/>
    <property type="evidence" value="ECO:0000314"/>
    <property type="project" value="BHF-UCL"/>
</dbReference>
<dbReference type="GO" id="GO:0005509">
    <property type="term" value="F:calcium ion binding"/>
    <property type="evidence" value="ECO:0007669"/>
    <property type="project" value="InterPro"/>
</dbReference>
<dbReference type="GO" id="GO:0019888">
    <property type="term" value="F:protein phosphatase regulator activity"/>
    <property type="evidence" value="ECO:0000318"/>
    <property type="project" value="GO_Central"/>
</dbReference>
<dbReference type="GO" id="GO:0030674">
    <property type="term" value="F:protein-macromolecule adaptor activity"/>
    <property type="evidence" value="ECO:0000314"/>
    <property type="project" value="BHF-UCL"/>
</dbReference>
<dbReference type="GO" id="GO:0001754">
    <property type="term" value="P:eye photoreceptor cell differentiation"/>
    <property type="evidence" value="ECO:0000316"/>
    <property type="project" value="BHF-UCL"/>
</dbReference>
<dbReference type="GO" id="GO:0090090">
    <property type="term" value="P:negative regulation of canonical Wnt signaling pathway"/>
    <property type="evidence" value="ECO:0000316"/>
    <property type="project" value="BHF-UCL"/>
</dbReference>
<dbReference type="GO" id="GO:0090263">
    <property type="term" value="P:positive regulation of canonical Wnt signaling pathway"/>
    <property type="evidence" value="ECO:0000314"/>
    <property type="project" value="BHF-UCL"/>
</dbReference>
<dbReference type="GO" id="GO:0045732">
    <property type="term" value="P:positive regulation of protein catabolic process"/>
    <property type="evidence" value="ECO:0000315"/>
    <property type="project" value="BHF-UCL"/>
</dbReference>
<dbReference type="GO" id="GO:0006470">
    <property type="term" value="P:protein dephosphorylation"/>
    <property type="evidence" value="ECO:0000250"/>
    <property type="project" value="UniProtKB"/>
</dbReference>
<dbReference type="GO" id="GO:0060828">
    <property type="term" value="P:regulation of canonical Wnt signaling pathway"/>
    <property type="evidence" value="ECO:0000318"/>
    <property type="project" value="GO_Central"/>
</dbReference>
<dbReference type="GO" id="GO:0090249">
    <property type="term" value="P:regulation of cell migration involved in somitogenic axis elongation"/>
    <property type="evidence" value="ECO:0000316"/>
    <property type="project" value="BHF-UCL"/>
</dbReference>
<dbReference type="GO" id="GO:0007525">
    <property type="term" value="P:somatic muscle development"/>
    <property type="evidence" value="ECO:0000316"/>
    <property type="project" value="BHF-UCL"/>
</dbReference>
<dbReference type="GO" id="GO:0061053">
    <property type="term" value="P:somite development"/>
    <property type="evidence" value="ECO:0000250"/>
    <property type="project" value="BHF-UCL"/>
</dbReference>
<dbReference type="GO" id="GO:0001756">
    <property type="term" value="P:somitogenesis"/>
    <property type="evidence" value="ECO:0000316"/>
    <property type="project" value="BHF-UCL"/>
</dbReference>
<dbReference type="CDD" id="cd21506">
    <property type="entry name" value="PPP2R3A"/>
    <property type="match status" value="1"/>
</dbReference>
<dbReference type="FunFam" id="1.10.238.220:FF:000001">
    <property type="entry name" value="Serine/threonine-protein phosphatase 2A regulatory subunit B'' subunit alpha"/>
    <property type="match status" value="1"/>
</dbReference>
<dbReference type="FunFam" id="1.10.238.10:FF:000628">
    <property type="entry name" value="Serine/threonine-protein phosphatase 2A regulatory subunit B'' subunit beta"/>
    <property type="match status" value="1"/>
</dbReference>
<dbReference type="FunFam" id="1.10.238.230:FF:000001">
    <property type="entry name" value="Serine/threonine-protein phosphatase 2A regulatory subunit B'' subunit beta"/>
    <property type="match status" value="1"/>
</dbReference>
<dbReference type="Gene3D" id="1.10.238.220">
    <property type="match status" value="1"/>
</dbReference>
<dbReference type="Gene3D" id="1.10.238.230">
    <property type="match status" value="1"/>
</dbReference>
<dbReference type="Gene3D" id="1.10.238.10">
    <property type="entry name" value="EF-hand"/>
    <property type="match status" value="1"/>
</dbReference>
<dbReference type="InterPro" id="IPR011992">
    <property type="entry name" value="EF-hand-dom_pair"/>
</dbReference>
<dbReference type="InterPro" id="IPR041534">
    <property type="entry name" value="EF-hand_13"/>
</dbReference>
<dbReference type="InterPro" id="IPR018247">
    <property type="entry name" value="EF_Hand_1_Ca_BS"/>
</dbReference>
<dbReference type="InterPro" id="IPR002048">
    <property type="entry name" value="EF_hand_dom"/>
</dbReference>
<dbReference type="InterPro" id="IPR048855">
    <property type="entry name" value="P2R3A_B_D_EF-hand"/>
</dbReference>
<dbReference type="PANTHER" id="PTHR14095">
    <property type="entry name" value="PHOSPHATASE 2A REGULATORY SUBUNIT-RELATED"/>
    <property type="match status" value="1"/>
</dbReference>
<dbReference type="PANTHER" id="PTHR14095:SF3">
    <property type="entry name" value="SERINE_THREONINE-PROTEIN PHOSPHATASE 2A REGULATORY SUBUNIT B'' SUBUNIT ALPHA"/>
    <property type="match status" value="1"/>
</dbReference>
<dbReference type="Pfam" id="PF17958">
    <property type="entry name" value="EF-hand_13"/>
    <property type="match status" value="1"/>
</dbReference>
<dbReference type="Pfam" id="PF13499">
    <property type="entry name" value="EF-hand_7"/>
    <property type="match status" value="1"/>
</dbReference>
<dbReference type="Pfam" id="PF21161">
    <property type="entry name" value="P2R3B_EF-hand"/>
    <property type="match status" value="1"/>
</dbReference>
<dbReference type="SUPFAM" id="SSF47473">
    <property type="entry name" value="EF-hand"/>
    <property type="match status" value="2"/>
</dbReference>
<dbReference type="PROSITE" id="PS00018">
    <property type="entry name" value="EF_HAND_1"/>
    <property type="match status" value="1"/>
</dbReference>
<dbReference type="PROSITE" id="PS50222">
    <property type="entry name" value="EF_HAND_2"/>
    <property type="match status" value="2"/>
</dbReference>
<sequence>MAATYRLVVSTVNHYSSVVIDRRFEQAIHYCTGTCHTFTHGIDCIVVHHSVCADLLHIPVSQFKDADLNSMFLPHENGLSSAEGDYPQQAFTGIPRVKRGSTFQNTYNLKDIAGEAISFASGKIKEFSFEKLKNSNHAAYRKGRKVKSDSFNRRSVDLDLLCGHYNNDGNAPSFGLLRSSSVEEKPLSHRNSLDTNLTSMFLQNFSEEDLVTQILEKHKIDNFSSGTDIKMCLDILLKCSEDLKKCTDIIKQCIKKKSGSSISEGSGNDTISSSETVYMNVMTRLASYLKKLPFEFMQSGNNEALDLTELISNMPSLQLTPFSPVFGTEQPPKYEDVVQLSASDSGRFQTIELQNDKPNSRKMDTVQSIPNNSTNSLYNLEVNDPRTLKAVQVQSQSLTMNPLENVSSDDLMETLYIEEESDGKKALDKGQKTENGPSHELLKVNEHRAEFPEHATHLKKCPTPMQNEIGKIFEKSFVNLPKEDCKSKVSKFEEGDQRDFTNSSSQEEIDKLLMDLESFSQKMETSLREPLAKGKNSNFLNSHSQLTGQTLVDLEPKSKVSSPIEKVSPSCLTRIIETNGHKIEEEDRALLLRILESIEDFAQELVECKSSRGSLSQEKEMMQILQETLTTSSQANLSVCRSPVGDKAKDTTSAVLIQQTPEVIKIQNKPEKKPGTPLPPPATSPSSPRPLSPVPHVNNVVNAPLSINIPRFYFPEGLPDTCSNHEQTLSRIETAFMDIEEQKADIYEMGKIAKVCGCPLYWKAPMFRAAGGEKTGFVTAQSFIAMWRKLLNNHHDDASKFICLLAKPNCSSLEQEDFIPLLQDVVDTHPGLTFLKDAPEFHSRYITTVIQRIFYTVNRSWSGKITSTEIRKSNFLQTLALLEEEEDINQITDYFSYEHFYVIYCKFWELDTDHDLYISQADLSRYNDQASSSRIIERIFSGAVTRGKTIQKEGRMSYADFVWFLISEEDKRNPTSIEYWFRCMDVDGDGVLSMYELEYFYEEQCERMEAMGIEPLPFHDLLCQMLDLVKPAVDGKITLRDLKRCRMAHIFYDTFFNLEKYLDHEQRDPFAVQKDVENDGPEPSDWDRFAAEEYETLVAEESAQAQFQEGFEDYETDEPASPSEFGNKSNKILSASLPEKCGKLQSVDEE</sequence>
<feature type="chain" id="PRO_0000071443" description="Serine/threonine-protein phosphatase 2A regulatory subunit B'' subunit alpha">
    <location>
        <begin position="1"/>
        <end position="1150"/>
    </location>
</feature>
<feature type="domain" description="EF-hand 1" evidence="1">
    <location>
        <begin position="758"/>
        <end position="793"/>
    </location>
</feature>
<feature type="domain" description="EF-hand 2" evidence="1">
    <location>
        <begin position="972"/>
        <end position="1007"/>
    </location>
</feature>
<feature type="region of interest" description="Disordered" evidence="2">
    <location>
        <begin position="661"/>
        <end position="693"/>
    </location>
</feature>
<feature type="region of interest" description="Disordered" evidence="2">
    <location>
        <begin position="1105"/>
        <end position="1132"/>
    </location>
</feature>
<feature type="compositionally biased region" description="Pro residues" evidence="2">
    <location>
        <begin position="676"/>
        <end position="693"/>
    </location>
</feature>
<feature type="binding site" evidence="1">
    <location>
        <position position="985"/>
    </location>
    <ligand>
        <name>Ca(2+)</name>
        <dbReference type="ChEBI" id="CHEBI:29108"/>
    </ligand>
</feature>
<feature type="binding site" evidence="1">
    <location>
        <position position="987"/>
    </location>
    <ligand>
        <name>Ca(2+)</name>
        <dbReference type="ChEBI" id="CHEBI:29108"/>
    </ligand>
</feature>
<feature type="binding site" evidence="1">
    <location>
        <position position="989"/>
    </location>
    <ligand>
        <name>Ca(2+)</name>
        <dbReference type="ChEBI" id="CHEBI:29108"/>
    </ligand>
</feature>
<feature type="binding site" evidence="1">
    <location>
        <position position="996"/>
    </location>
    <ligand>
        <name>Ca(2+)</name>
        <dbReference type="ChEBI" id="CHEBI:29108"/>
    </ligand>
</feature>
<feature type="splice variant" id="VSP_045203" description="In isoform 3." evidence="3">
    <location>
        <begin position="1"/>
        <end position="736"/>
    </location>
</feature>
<feature type="splice variant" id="VSP_005107" description="In isoform PR72." evidence="3 4">
    <location>
        <begin position="1"/>
        <end position="621"/>
    </location>
</feature>
<feature type="splice variant" id="VSP_005108" description="In isoform PR72." evidence="3 4">
    <original>MQILQETLTTSSQANLSVCRSPVGDKAKDTTSAVLIQQTPEVIK</original>
    <variation>MMIKETSLRRDPDLRGELAFLARGCDFVLPSRFKKRLKSFQQTQ</variation>
    <location>
        <begin position="622"/>
        <end position="665"/>
    </location>
</feature>
<feature type="sequence variant" id="VAR_051739" description="In dbSNP:rs9814557.">
    <original>D</original>
    <variation>G</variation>
    <location>
        <position position="67"/>
    </location>
</feature>
<feature type="sequence variant" id="VAR_061760" description="In dbSNP:rs57374999.">
    <original>D</original>
    <variation>N</variation>
    <location>
        <position position="67"/>
    </location>
</feature>
<feature type="sequence variant" id="VAR_051740" description="In dbSNP:rs36020282.">
    <original>N</original>
    <variation>S</variation>
    <location>
        <position position="108"/>
    </location>
</feature>
<feature type="sequence variant" id="VAR_051741" description="In dbSNP:rs6779903.">
    <original>A</original>
    <variation>S</variation>
    <location>
        <position position="171"/>
    </location>
</feature>
<feature type="sequence variant" id="VAR_051742" description="In dbSNP:rs34901937.">
    <original>P</original>
    <variation>A</variation>
    <location>
        <position position="481"/>
    </location>
</feature>
<feature type="sequence variant" id="VAR_051743" description="In dbSNP:rs17197552.">
    <original>S</original>
    <variation>G</variation>
    <location>
        <position position="642"/>
    </location>
</feature>
<feature type="sequence variant" id="VAR_051744" description="In dbSNP:rs9826032.">
    <original>P</original>
    <variation>L</variation>
    <location>
        <position position="695"/>
    </location>
</feature>
<feature type="sequence variant" id="VAR_022095" description="In dbSNP:rs16843645.">
    <original>D</original>
    <variation>N</variation>
    <location>
        <position position="745"/>
    </location>
</feature>
<feature type="helix" evidence="5">
    <location>
        <begin position="797"/>
        <end position="805"/>
    </location>
</feature>
<feature type="strand" evidence="5">
    <location>
        <begin position="811"/>
        <end position="813"/>
    </location>
</feature>
<feature type="helix" evidence="5">
    <location>
        <begin position="815"/>
        <end position="818"/>
    </location>
</feature>
<feature type="helix" evidence="5">
    <location>
        <begin position="819"/>
        <end position="828"/>
    </location>
</feature>
<feature type="turn" evidence="5">
    <location>
        <begin position="830"/>
        <end position="832"/>
    </location>
</feature>
<feature type="helix" evidence="5">
    <location>
        <begin position="833"/>
        <end position="837"/>
    </location>
</feature>
<feature type="helix" evidence="5">
    <location>
        <begin position="839"/>
        <end position="857"/>
    </location>
</feature>
<feature type="strand" evidence="6">
    <location>
        <begin position="861"/>
        <end position="863"/>
    </location>
</feature>
<feature type="helix" evidence="5">
    <location>
        <begin position="867"/>
        <end position="871"/>
    </location>
</feature>
<feature type="helix" evidence="5">
    <location>
        <begin position="875"/>
        <end position="882"/>
    </location>
</feature>
<feature type="helix" evidence="5">
    <location>
        <begin position="888"/>
        <end position="890"/>
    </location>
</feature>
<feature type="turn" evidence="5">
    <location>
        <begin position="892"/>
        <end position="895"/>
    </location>
</feature>
<feature type="helix" evidence="5">
    <location>
        <begin position="897"/>
        <end position="910"/>
    </location>
</feature>
<feature type="strand" evidence="6">
    <location>
        <begin position="915"/>
        <end position="919"/>
    </location>
</feature>
<feature type="helix" evidence="5">
    <location>
        <begin position="920"/>
        <end position="923"/>
    </location>
</feature>
<feature type="turn" evidence="5">
    <location>
        <begin position="924"/>
        <end position="929"/>
    </location>
</feature>
<feature type="helix" evidence="5">
    <location>
        <begin position="933"/>
        <end position="939"/>
    </location>
</feature>
<feature type="turn" evidence="5">
    <location>
        <begin position="940"/>
        <end position="944"/>
    </location>
</feature>
<feature type="helix" evidence="5">
    <location>
        <begin position="958"/>
        <end position="969"/>
    </location>
</feature>
<feature type="helix" evidence="5">
    <location>
        <begin position="974"/>
        <end position="984"/>
    </location>
</feature>
<feature type="strand" evidence="5">
    <location>
        <begin position="989"/>
        <end position="992"/>
    </location>
</feature>
<feature type="helix" evidence="5">
    <location>
        <begin position="994"/>
        <end position="1010"/>
    </location>
</feature>
<feature type="helix" evidence="5">
    <location>
        <begin position="1018"/>
        <end position="1029"/>
    </location>
</feature>
<feature type="helix" evidence="5">
    <location>
        <begin position="1039"/>
        <end position="1045"/>
    </location>
</feature>
<feature type="helix" evidence="5">
    <location>
        <begin position="1048"/>
        <end position="1056"/>
    </location>
</feature>
<feature type="helix" evidence="5">
    <location>
        <begin position="1058"/>
        <end position="1062"/>
    </location>
</feature>
<name>P2R3A_HUMAN</name>
<keyword id="KW-0002">3D-structure</keyword>
<keyword id="KW-0025">Alternative splicing</keyword>
<keyword id="KW-0106">Calcium</keyword>
<keyword id="KW-0903">Direct protein sequencing</keyword>
<keyword id="KW-0479">Metal-binding</keyword>
<keyword id="KW-1267">Proteomics identification</keyword>
<keyword id="KW-1185">Reference proteome</keyword>
<keyword id="KW-0677">Repeat</keyword>
<evidence type="ECO:0000255" key="1">
    <source>
        <dbReference type="PROSITE-ProRule" id="PRU00448"/>
    </source>
</evidence>
<evidence type="ECO:0000256" key="2">
    <source>
        <dbReference type="SAM" id="MobiDB-lite"/>
    </source>
</evidence>
<evidence type="ECO:0000303" key="3">
    <source>
    </source>
</evidence>
<evidence type="ECO:0000303" key="4">
    <source>
    </source>
</evidence>
<evidence type="ECO:0007829" key="5">
    <source>
        <dbReference type="PDB" id="4I5J"/>
    </source>
</evidence>
<evidence type="ECO:0007829" key="6">
    <source>
        <dbReference type="PDB" id="4I5K"/>
    </source>
</evidence>
<reference key="1">
    <citation type="journal article" date="1993" name="J. Biol. Chem.">
        <title>Structure and expression of a 72-kDa regulatory subunit of protein phosphatase 2A. Evidence for different size forms produced by alternative splicing.</title>
        <authorList>
            <person name="Hendrix P."/>
            <person name="Mayer-Jaekel R.E."/>
            <person name="Cron P."/>
            <person name="Goris J."/>
            <person name="Hofsteenge J."/>
            <person name="Merlevede W."/>
            <person name="Hemmings B.A."/>
        </authorList>
    </citation>
    <scope>NUCLEOTIDE SEQUENCE [MRNA] (ISOFORMS PR72 AND PR130)</scope>
    <scope>PARTIAL PROTEIN SEQUENCE</scope>
    <scope>ALTERNATIVE SPLICING</scope>
    <source>
        <tissue>Fetal brain</tissue>
    </source>
</reference>
<reference key="2">
    <citation type="journal article" date="2004" name="Nat. Genet.">
        <title>Complete sequencing and characterization of 21,243 full-length human cDNAs.</title>
        <authorList>
            <person name="Ota T."/>
            <person name="Suzuki Y."/>
            <person name="Nishikawa T."/>
            <person name="Otsuki T."/>
            <person name="Sugiyama T."/>
            <person name="Irie R."/>
            <person name="Wakamatsu A."/>
            <person name="Hayashi K."/>
            <person name="Sato H."/>
            <person name="Nagai K."/>
            <person name="Kimura K."/>
            <person name="Makita H."/>
            <person name="Sekine M."/>
            <person name="Obayashi M."/>
            <person name="Nishi T."/>
            <person name="Shibahara T."/>
            <person name="Tanaka T."/>
            <person name="Ishii S."/>
            <person name="Yamamoto J."/>
            <person name="Saito K."/>
            <person name="Kawai Y."/>
            <person name="Isono Y."/>
            <person name="Nakamura Y."/>
            <person name="Nagahari K."/>
            <person name="Murakami K."/>
            <person name="Yasuda T."/>
            <person name="Iwayanagi T."/>
            <person name="Wagatsuma M."/>
            <person name="Shiratori A."/>
            <person name="Sudo H."/>
            <person name="Hosoiri T."/>
            <person name="Kaku Y."/>
            <person name="Kodaira H."/>
            <person name="Kondo H."/>
            <person name="Sugawara M."/>
            <person name="Takahashi M."/>
            <person name="Kanda K."/>
            <person name="Yokoi T."/>
            <person name="Furuya T."/>
            <person name="Kikkawa E."/>
            <person name="Omura Y."/>
            <person name="Abe K."/>
            <person name="Kamihara K."/>
            <person name="Katsuta N."/>
            <person name="Sato K."/>
            <person name="Tanikawa M."/>
            <person name="Yamazaki M."/>
            <person name="Ninomiya K."/>
            <person name="Ishibashi T."/>
            <person name="Yamashita H."/>
            <person name="Murakawa K."/>
            <person name="Fujimori K."/>
            <person name="Tanai H."/>
            <person name="Kimata M."/>
            <person name="Watanabe M."/>
            <person name="Hiraoka S."/>
            <person name="Chiba Y."/>
            <person name="Ishida S."/>
            <person name="Ono Y."/>
            <person name="Takiguchi S."/>
            <person name="Watanabe S."/>
            <person name="Yosida M."/>
            <person name="Hotuta T."/>
            <person name="Kusano J."/>
            <person name="Kanehori K."/>
            <person name="Takahashi-Fujii A."/>
            <person name="Hara H."/>
            <person name="Tanase T.-O."/>
            <person name="Nomura Y."/>
            <person name="Togiya S."/>
            <person name="Komai F."/>
            <person name="Hara R."/>
            <person name="Takeuchi K."/>
            <person name="Arita M."/>
            <person name="Imose N."/>
            <person name="Musashino K."/>
            <person name="Yuuki H."/>
            <person name="Oshima A."/>
            <person name="Sasaki N."/>
            <person name="Aotsuka S."/>
            <person name="Yoshikawa Y."/>
            <person name="Matsunawa H."/>
            <person name="Ichihara T."/>
            <person name="Shiohata N."/>
            <person name="Sano S."/>
            <person name="Moriya S."/>
            <person name="Momiyama H."/>
            <person name="Satoh N."/>
            <person name="Takami S."/>
            <person name="Terashima Y."/>
            <person name="Suzuki O."/>
            <person name="Nakagawa S."/>
            <person name="Senoh A."/>
            <person name="Mizoguchi H."/>
            <person name="Goto Y."/>
            <person name="Shimizu F."/>
            <person name="Wakebe H."/>
            <person name="Hishigaki H."/>
            <person name="Watanabe T."/>
            <person name="Sugiyama A."/>
            <person name="Takemoto M."/>
            <person name="Kawakami B."/>
            <person name="Yamazaki M."/>
            <person name="Watanabe K."/>
            <person name="Kumagai A."/>
            <person name="Itakura S."/>
            <person name="Fukuzumi Y."/>
            <person name="Fujimori Y."/>
            <person name="Komiyama M."/>
            <person name="Tashiro H."/>
            <person name="Tanigami A."/>
            <person name="Fujiwara T."/>
            <person name="Ono T."/>
            <person name="Yamada K."/>
            <person name="Fujii Y."/>
            <person name="Ozaki K."/>
            <person name="Hirao M."/>
            <person name="Ohmori Y."/>
            <person name="Kawabata A."/>
            <person name="Hikiji T."/>
            <person name="Kobatake N."/>
            <person name="Inagaki H."/>
            <person name="Ikema Y."/>
            <person name="Okamoto S."/>
            <person name="Okitani R."/>
            <person name="Kawakami T."/>
            <person name="Noguchi S."/>
            <person name="Itoh T."/>
            <person name="Shigeta K."/>
            <person name="Senba T."/>
            <person name="Matsumura K."/>
            <person name="Nakajima Y."/>
            <person name="Mizuno T."/>
            <person name="Morinaga M."/>
            <person name="Sasaki M."/>
            <person name="Togashi T."/>
            <person name="Oyama M."/>
            <person name="Hata H."/>
            <person name="Watanabe M."/>
            <person name="Komatsu T."/>
            <person name="Mizushima-Sugano J."/>
            <person name="Satoh T."/>
            <person name="Shirai Y."/>
            <person name="Takahashi Y."/>
            <person name="Nakagawa K."/>
            <person name="Okumura K."/>
            <person name="Nagase T."/>
            <person name="Nomura N."/>
            <person name="Kikuchi H."/>
            <person name="Masuho Y."/>
            <person name="Yamashita R."/>
            <person name="Nakai K."/>
            <person name="Yada T."/>
            <person name="Nakamura Y."/>
            <person name="Ohara O."/>
            <person name="Isogai T."/>
            <person name="Sugano S."/>
        </authorList>
    </citation>
    <scope>NUCLEOTIDE SEQUENCE [LARGE SCALE MRNA] (ISOFORMS PR72; PR130 AND 3)</scope>
    <source>
        <tissue>Lung</tissue>
        <tissue>Tongue</tissue>
        <tissue>Trachea</tissue>
    </source>
</reference>
<reference key="3">
    <citation type="journal article" date="2006" name="Nature">
        <title>The DNA sequence, annotation and analysis of human chromosome 3.</title>
        <authorList>
            <person name="Muzny D.M."/>
            <person name="Scherer S.E."/>
            <person name="Kaul R."/>
            <person name="Wang J."/>
            <person name="Yu J."/>
            <person name="Sudbrak R."/>
            <person name="Buhay C.J."/>
            <person name="Chen R."/>
            <person name="Cree A."/>
            <person name="Ding Y."/>
            <person name="Dugan-Rocha S."/>
            <person name="Gill R."/>
            <person name="Gunaratne P."/>
            <person name="Harris R.A."/>
            <person name="Hawes A.C."/>
            <person name="Hernandez J."/>
            <person name="Hodgson A.V."/>
            <person name="Hume J."/>
            <person name="Jackson A."/>
            <person name="Khan Z.M."/>
            <person name="Kovar-Smith C."/>
            <person name="Lewis L.R."/>
            <person name="Lozado R.J."/>
            <person name="Metzker M.L."/>
            <person name="Milosavljevic A."/>
            <person name="Miner G.R."/>
            <person name="Morgan M.B."/>
            <person name="Nazareth L.V."/>
            <person name="Scott G."/>
            <person name="Sodergren E."/>
            <person name="Song X.-Z."/>
            <person name="Steffen D."/>
            <person name="Wei S."/>
            <person name="Wheeler D.A."/>
            <person name="Wright M.W."/>
            <person name="Worley K.C."/>
            <person name="Yuan Y."/>
            <person name="Zhang Z."/>
            <person name="Adams C.Q."/>
            <person name="Ansari-Lari M.A."/>
            <person name="Ayele M."/>
            <person name="Brown M.J."/>
            <person name="Chen G."/>
            <person name="Chen Z."/>
            <person name="Clendenning J."/>
            <person name="Clerc-Blankenburg K.P."/>
            <person name="Chen R."/>
            <person name="Chen Z."/>
            <person name="Davis C."/>
            <person name="Delgado O."/>
            <person name="Dinh H.H."/>
            <person name="Dong W."/>
            <person name="Draper H."/>
            <person name="Ernst S."/>
            <person name="Fu G."/>
            <person name="Gonzalez-Garay M.L."/>
            <person name="Garcia D.K."/>
            <person name="Gillett W."/>
            <person name="Gu J."/>
            <person name="Hao B."/>
            <person name="Haugen E."/>
            <person name="Havlak P."/>
            <person name="He X."/>
            <person name="Hennig S."/>
            <person name="Hu S."/>
            <person name="Huang W."/>
            <person name="Jackson L.R."/>
            <person name="Jacob L.S."/>
            <person name="Kelly S.H."/>
            <person name="Kube M."/>
            <person name="Levy R."/>
            <person name="Li Z."/>
            <person name="Liu B."/>
            <person name="Liu J."/>
            <person name="Liu W."/>
            <person name="Lu J."/>
            <person name="Maheshwari M."/>
            <person name="Nguyen B.-V."/>
            <person name="Okwuonu G.O."/>
            <person name="Palmeiri A."/>
            <person name="Pasternak S."/>
            <person name="Perez L.M."/>
            <person name="Phelps K.A."/>
            <person name="Plopper F.J."/>
            <person name="Qiang B."/>
            <person name="Raymond C."/>
            <person name="Rodriguez R."/>
            <person name="Saenphimmachak C."/>
            <person name="Santibanez J."/>
            <person name="Shen H."/>
            <person name="Shen Y."/>
            <person name="Subramanian S."/>
            <person name="Tabor P.E."/>
            <person name="Verduzco D."/>
            <person name="Waldron L."/>
            <person name="Wang J."/>
            <person name="Wang J."/>
            <person name="Wang Q."/>
            <person name="Williams G.A."/>
            <person name="Wong G.K.-S."/>
            <person name="Yao Z."/>
            <person name="Zhang J."/>
            <person name="Zhang X."/>
            <person name="Zhao G."/>
            <person name="Zhou J."/>
            <person name="Zhou Y."/>
            <person name="Nelson D."/>
            <person name="Lehrach H."/>
            <person name="Reinhardt R."/>
            <person name="Naylor S.L."/>
            <person name="Yang H."/>
            <person name="Olson M."/>
            <person name="Weinstock G."/>
            <person name="Gibbs R.A."/>
        </authorList>
    </citation>
    <scope>NUCLEOTIDE SEQUENCE [LARGE SCALE GENOMIC DNA]</scope>
</reference>
<reference key="4">
    <citation type="submission" date="2005-09" db="EMBL/GenBank/DDBJ databases">
        <authorList>
            <person name="Mural R.J."/>
            <person name="Istrail S."/>
            <person name="Sutton G.G."/>
            <person name="Florea L."/>
            <person name="Halpern A.L."/>
            <person name="Mobarry C.M."/>
            <person name="Lippert R."/>
            <person name="Walenz B."/>
            <person name="Shatkay H."/>
            <person name="Dew I."/>
            <person name="Miller J.R."/>
            <person name="Flanigan M.J."/>
            <person name="Edwards N.J."/>
            <person name="Bolanos R."/>
            <person name="Fasulo D."/>
            <person name="Halldorsson B.V."/>
            <person name="Hannenhalli S."/>
            <person name="Turner R."/>
            <person name="Yooseph S."/>
            <person name="Lu F."/>
            <person name="Nusskern D.R."/>
            <person name="Shue B.C."/>
            <person name="Zheng X.H."/>
            <person name="Zhong F."/>
            <person name="Delcher A.L."/>
            <person name="Huson D.H."/>
            <person name="Kravitz S.A."/>
            <person name="Mouchard L."/>
            <person name="Reinert K."/>
            <person name="Remington K.A."/>
            <person name="Clark A.G."/>
            <person name="Waterman M.S."/>
            <person name="Eichler E.E."/>
            <person name="Adams M.D."/>
            <person name="Hunkapiller M.W."/>
            <person name="Myers E.W."/>
            <person name="Venter J.C."/>
        </authorList>
    </citation>
    <scope>NUCLEOTIDE SEQUENCE [LARGE SCALE GENOMIC DNA]</scope>
</reference>
<reference key="5">
    <citation type="submission" date="2000-07" db="EMBL/GenBank/DDBJ databases">
        <authorList>
            <consortium name="The European IMAGE consortium"/>
        </authorList>
    </citation>
    <scope>NUCLEOTIDE SEQUENCE [LARGE SCALE MRNA] OF 768-1150</scope>
</reference>
<accession>Q06190</accession>
<accession>A8KAE7</accession>
<accession>B4DNU1</accession>
<accession>B7ZAE3</accession>
<accession>Q06189</accession>
<accession>Q9NPQ5</accession>
<comment type="function">
    <text>The B regulatory subunit might modulate substrate selectivity and catalytic activity, and might also direct the localization of the catalytic enzyme to a particular subcellular compartment.</text>
</comment>
<comment type="subunit">
    <text>PP2A consists of a common heterodimeric core enzyme, composed of a 36 kDa catalytic subunit (subunit C) and a 65 kDa constant regulatory subunit (PR65 or subunit A), that associates with a variety of regulatory subunits. Proteins that associate with the core dimer include three families of regulatory subunits B (the R2/B/PR55/B55, R3/B''/PR72/PR130/PR59 and R5/B'/B56 families), the 48 kDa variable regulatory subunit, viral proteins, and cell signaling molecules.</text>
</comment>
<comment type="interaction">
    <interactant intactId="EBI-949204">
        <id>Q06190-1</id>
    </interactant>
    <interactant intactId="EBI-1538217">
        <id>Q969G9</id>
        <label>NKD1</label>
    </interactant>
    <organismsDiffer>false</organismsDiffer>
    <experiments>4</experiments>
</comment>
<comment type="interaction">
    <interactant intactId="EBI-949210">
        <id>Q06190-2</id>
    </interactant>
    <interactant intactId="EBI-1538217">
        <id>Q969G9</id>
        <label>NKD1</label>
    </interactant>
    <organismsDiffer>false</organismsDiffer>
    <experiments>3</experiments>
</comment>
<comment type="alternative products">
    <event type="alternative splicing"/>
    <isoform>
        <id>Q06190-1</id>
        <name>PR130</name>
        <name>130 kDa</name>
        <sequence type="displayed"/>
    </isoform>
    <isoform>
        <id>Q06190-2</id>
        <name>PR72</name>
        <name>72 kDa</name>
        <sequence type="described" ref="VSP_005107 VSP_005108"/>
    </isoform>
    <isoform>
        <id>Q06190-3</id>
        <name>3</name>
        <sequence type="described" ref="VSP_045203"/>
    </isoform>
</comment>
<comment type="tissue specificity">
    <text>Expressed in heart, brain, placenta, lung, muscle and kidney.</text>
</comment>
<gene>
    <name type="primary">PPP2R3A</name>
    <name type="synonym">PPP2R3</name>
</gene>
<protein>
    <recommendedName>
        <fullName>Serine/threonine-protein phosphatase 2A regulatory subunit B'' subunit alpha</fullName>
    </recommendedName>
    <alternativeName>
        <fullName>PP2A subunit B isoform PR72/PR130</fullName>
    </alternativeName>
    <alternativeName>
        <fullName>PP2A subunit B isoform R3 isoform</fullName>
    </alternativeName>
    <alternativeName>
        <fullName>PP2A subunit B isoforms B''-PR72/PR130</fullName>
    </alternativeName>
    <alternativeName>
        <fullName>PP2A subunit B isoforms B72/B130</fullName>
    </alternativeName>
    <alternativeName>
        <fullName>Serine/threonine-protein phosphatase 2A 72/130 kDa regulatory subunit B</fullName>
    </alternativeName>
</protein>
<proteinExistence type="evidence at protein level"/>
<organism>
    <name type="scientific">Homo sapiens</name>
    <name type="common">Human</name>
    <dbReference type="NCBI Taxonomy" id="9606"/>
    <lineage>
        <taxon>Eukaryota</taxon>
        <taxon>Metazoa</taxon>
        <taxon>Chordata</taxon>
        <taxon>Craniata</taxon>
        <taxon>Vertebrata</taxon>
        <taxon>Euteleostomi</taxon>
        <taxon>Mammalia</taxon>
        <taxon>Eutheria</taxon>
        <taxon>Euarchontoglires</taxon>
        <taxon>Primates</taxon>
        <taxon>Haplorrhini</taxon>
        <taxon>Catarrhini</taxon>
        <taxon>Hominidae</taxon>
        <taxon>Homo</taxon>
    </lineage>
</organism>